<keyword id="KW-0539">Nucleus</keyword>
<keyword id="KW-1185">Reference proteome</keyword>
<keyword id="KW-0690">Ribosome biogenesis</keyword>
<keyword id="KW-0694">RNA-binding</keyword>
<keyword id="KW-0698">rRNA processing</keyword>
<name>ESF2_COCIM</name>
<dbReference type="EMBL" id="GG704915">
    <property type="protein sequence ID" value="EAS28247.3"/>
    <property type="molecule type" value="Genomic_DNA"/>
</dbReference>
<dbReference type="RefSeq" id="XP_001239830.1">
    <property type="nucleotide sequence ID" value="XM_001239829.2"/>
</dbReference>
<dbReference type="FunCoup" id="Q1DJR2">
    <property type="interactions" value="898"/>
</dbReference>
<dbReference type="STRING" id="246410.Q1DJR2"/>
<dbReference type="GeneID" id="4559134"/>
<dbReference type="KEGG" id="cim:CIMG_09451"/>
<dbReference type="VEuPathDB" id="FungiDB:CIMG_09451"/>
<dbReference type="InParanoid" id="Q1DJR2"/>
<dbReference type="OMA" id="TRKHNDF"/>
<dbReference type="OrthoDB" id="287393at2759"/>
<dbReference type="Proteomes" id="UP000001261">
    <property type="component" value="Unassembled WGS sequence"/>
</dbReference>
<dbReference type="GO" id="GO:0005730">
    <property type="term" value="C:nucleolus"/>
    <property type="evidence" value="ECO:0007669"/>
    <property type="project" value="UniProtKB-SubCell"/>
</dbReference>
<dbReference type="GO" id="GO:0003723">
    <property type="term" value="F:RNA binding"/>
    <property type="evidence" value="ECO:0007669"/>
    <property type="project" value="UniProtKB-KW"/>
</dbReference>
<dbReference type="GO" id="GO:0000480">
    <property type="term" value="P:endonucleolytic cleavage in 5'-ETS of tricistronic rRNA transcript (SSU-rRNA, 5.8S rRNA, LSU-rRNA)"/>
    <property type="evidence" value="ECO:0007669"/>
    <property type="project" value="TreeGrafter"/>
</dbReference>
<dbReference type="GO" id="GO:0000447">
    <property type="term" value="P:endonucleolytic cleavage in ITS1 to separate SSU-rRNA from 5.8S rRNA and LSU-rRNA from tricistronic rRNA transcript (SSU-rRNA, 5.8S rRNA, LSU-rRNA)"/>
    <property type="evidence" value="ECO:0007669"/>
    <property type="project" value="TreeGrafter"/>
</dbReference>
<dbReference type="GO" id="GO:0000472">
    <property type="term" value="P:endonucleolytic cleavage to generate mature 5'-end of SSU-rRNA from (SSU-rRNA, 5.8S rRNA, LSU-rRNA)"/>
    <property type="evidence" value="ECO:0007669"/>
    <property type="project" value="TreeGrafter"/>
</dbReference>
<dbReference type="GO" id="GO:0034462">
    <property type="term" value="P:small-subunit processome assembly"/>
    <property type="evidence" value="ECO:0007669"/>
    <property type="project" value="TreeGrafter"/>
</dbReference>
<dbReference type="CDD" id="cd12263">
    <property type="entry name" value="RRM_ABT1_like"/>
    <property type="match status" value="1"/>
</dbReference>
<dbReference type="Gene3D" id="3.30.70.330">
    <property type="match status" value="1"/>
</dbReference>
<dbReference type="InterPro" id="IPR039119">
    <property type="entry name" value="ABT1/Esf2"/>
</dbReference>
<dbReference type="InterPro" id="IPR034353">
    <property type="entry name" value="ABT1/ESF2_RRM"/>
</dbReference>
<dbReference type="InterPro" id="IPR012677">
    <property type="entry name" value="Nucleotide-bd_a/b_plait_sf"/>
</dbReference>
<dbReference type="InterPro" id="IPR035979">
    <property type="entry name" value="RBD_domain_sf"/>
</dbReference>
<dbReference type="PANTHER" id="PTHR12311">
    <property type="entry name" value="ACTIVATOR OF BASAL TRANSCRIPTION 1"/>
    <property type="match status" value="1"/>
</dbReference>
<dbReference type="PANTHER" id="PTHR12311:SF7">
    <property type="entry name" value="ACTIVATOR OF BASAL TRANSCRIPTION 1"/>
    <property type="match status" value="1"/>
</dbReference>
<dbReference type="SUPFAM" id="SSF54928">
    <property type="entry name" value="RNA-binding domain, RBD"/>
    <property type="match status" value="1"/>
</dbReference>
<proteinExistence type="inferred from homology"/>
<organism>
    <name type="scientific">Coccidioides immitis (strain RS)</name>
    <name type="common">Valley fever fungus</name>
    <dbReference type="NCBI Taxonomy" id="246410"/>
    <lineage>
        <taxon>Eukaryota</taxon>
        <taxon>Fungi</taxon>
        <taxon>Dikarya</taxon>
        <taxon>Ascomycota</taxon>
        <taxon>Pezizomycotina</taxon>
        <taxon>Eurotiomycetes</taxon>
        <taxon>Eurotiomycetidae</taxon>
        <taxon>Onygenales</taxon>
        <taxon>Onygenaceae</taxon>
        <taxon>Coccidioides</taxon>
    </lineage>
</organism>
<accession>Q1DJR2</accession>
<accession>J3K349</accession>
<sequence length="356" mass="39985">MTTRKRTDFWDIPSDEEDNDVGYDSEAAQESKGRSSVSKSTTAPSRLRRPSKRRKLSITEHGGGSDNGSGSESEDEGIDTESDEPEQEEQIEEGEQEDEEAESPIEPTSKSTPAATATTTTSSTDIDTTTSTASNPKLKPKKNKTGVIYFSSLPPYLKPFALKSLLIARGFGPITKIFLTPSVQSSSAGKRSNKRRMYSDGWVEFASKRTAKICAETLNATIVGGKKGGWYHDDVWNMKYLRGFKWADLMEQVQRERKETEARRRVEDAKARKEEKVFLAGVEKGKVFEGIRKKREEKEKKLRAGGEGDMGDGGKVSLDKPRRVFRQNEVRDREKDGVRKERKVDEDVQRVLAKIF</sequence>
<comment type="function">
    <text evidence="1">Involved in the small subunit (SSU) processome assembly and function, and in the 18S rRNA synthesis. Required for the early cleavages at sites A0, A1 and A2 (By similarity).</text>
</comment>
<comment type="subcellular location">
    <subcellularLocation>
        <location evidence="1">Nucleus</location>
        <location evidence="1">Nucleolus</location>
    </subcellularLocation>
</comment>
<comment type="similarity">
    <text evidence="3">Belongs to the ESF2/ABP1 family.</text>
</comment>
<evidence type="ECO:0000250" key="1"/>
<evidence type="ECO:0000256" key="2">
    <source>
        <dbReference type="SAM" id="MobiDB-lite"/>
    </source>
</evidence>
<evidence type="ECO:0000305" key="3"/>
<reference key="1">
    <citation type="journal article" date="2009" name="Genome Res.">
        <title>Comparative genomic analyses of the human fungal pathogens Coccidioides and their relatives.</title>
        <authorList>
            <person name="Sharpton T.J."/>
            <person name="Stajich J.E."/>
            <person name="Rounsley S.D."/>
            <person name="Gardner M.J."/>
            <person name="Wortman J.R."/>
            <person name="Jordar V.S."/>
            <person name="Maiti R."/>
            <person name="Kodira C.D."/>
            <person name="Neafsey D.E."/>
            <person name="Zeng Q."/>
            <person name="Hung C.-Y."/>
            <person name="McMahan C."/>
            <person name="Muszewska A."/>
            <person name="Grynberg M."/>
            <person name="Mandel M.A."/>
            <person name="Kellner E.M."/>
            <person name="Barker B.M."/>
            <person name="Galgiani J.N."/>
            <person name="Orbach M.J."/>
            <person name="Kirkland T.N."/>
            <person name="Cole G.T."/>
            <person name="Henn M.R."/>
            <person name="Birren B.W."/>
            <person name="Taylor J.W."/>
        </authorList>
    </citation>
    <scope>NUCLEOTIDE SEQUENCE [LARGE SCALE GENOMIC DNA]</scope>
    <source>
        <strain>RS</strain>
    </source>
</reference>
<reference key="2">
    <citation type="journal article" date="2010" name="Genome Res.">
        <title>Population genomic sequencing of Coccidioides fungi reveals recent hybridization and transposon control.</title>
        <authorList>
            <person name="Neafsey D.E."/>
            <person name="Barker B.M."/>
            <person name="Sharpton T.J."/>
            <person name="Stajich J.E."/>
            <person name="Park D.J."/>
            <person name="Whiston E."/>
            <person name="Hung C.-Y."/>
            <person name="McMahan C."/>
            <person name="White J."/>
            <person name="Sykes S."/>
            <person name="Heiman D."/>
            <person name="Young S."/>
            <person name="Zeng Q."/>
            <person name="Abouelleil A."/>
            <person name="Aftuck L."/>
            <person name="Bessette D."/>
            <person name="Brown A."/>
            <person name="FitzGerald M."/>
            <person name="Lui A."/>
            <person name="Macdonald J.P."/>
            <person name="Priest M."/>
            <person name="Orbach M.J."/>
            <person name="Galgiani J.N."/>
            <person name="Kirkland T.N."/>
            <person name="Cole G.T."/>
            <person name="Birren B.W."/>
            <person name="Henn M.R."/>
            <person name="Taylor J.W."/>
            <person name="Rounsley S.D."/>
        </authorList>
    </citation>
    <scope>GENOME REANNOTATION</scope>
    <source>
        <strain>RS</strain>
    </source>
</reference>
<gene>
    <name type="primary">ESF2</name>
    <name type="ORF">CIMG_09451</name>
</gene>
<protein>
    <recommendedName>
        <fullName>Pre-rRNA-processing protein ESF2</fullName>
    </recommendedName>
    <alternativeName>
        <fullName>18S rRNA factor 2</fullName>
    </alternativeName>
</protein>
<feature type="chain" id="PRO_0000285369" description="Pre-rRNA-processing protein ESF2">
    <location>
        <begin position="1"/>
        <end position="356"/>
    </location>
</feature>
<feature type="domain" description="RRM">
    <location>
        <begin position="146"/>
        <end position="235"/>
    </location>
</feature>
<feature type="region of interest" description="Disordered" evidence="2">
    <location>
        <begin position="1"/>
        <end position="141"/>
    </location>
</feature>
<feature type="region of interest" description="Disordered" evidence="2">
    <location>
        <begin position="298"/>
        <end position="318"/>
    </location>
</feature>
<feature type="compositionally biased region" description="Acidic residues" evidence="2">
    <location>
        <begin position="13"/>
        <end position="23"/>
    </location>
</feature>
<feature type="compositionally biased region" description="Polar residues" evidence="2">
    <location>
        <begin position="34"/>
        <end position="43"/>
    </location>
</feature>
<feature type="compositionally biased region" description="Basic residues" evidence="2">
    <location>
        <begin position="46"/>
        <end position="56"/>
    </location>
</feature>
<feature type="compositionally biased region" description="Acidic residues" evidence="2">
    <location>
        <begin position="72"/>
        <end position="103"/>
    </location>
</feature>
<feature type="compositionally biased region" description="Low complexity" evidence="2">
    <location>
        <begin position="108"/>
        <end position="134"/>
    </location>
</feature>